<feature type="chain" id="PRO_0000130212" description="Small ribosomal subunit protein uS3">
    <location>
        <begin position="1"/>
        <end position="217"/>
    </location>
</feature>
<feature type="domain" description="KH type-2" evidence="1">
    <location>
        <begin position="38"/>
        <end position="106"/>
    </location>
</feature>
<proteinExistence type="inferred from homology"/>
<sequence length="217" mass="24134">MGQKVHPIGMRVGIIRDWDAKWYAEKEYADYLHEDLAIRKFINKELADASVSTIEIERAVNKVIVSLHTAKPGMVIGKGGANVDALRGQLNKLTGKQVHINIIEIKQPDLDAHLVGENIARQLEQRVAFRRAQKQAIQRTMRAGAKGIKTQVSGRLNGADIARAEGYSEGTVPLHTLRADIDYAWEEADTTYGKLGVKVWIYRGEVLPARKNTKGGK</sequence>
<dbReference type="EMBL" id="CP000003">
    <property type="protein sequence ID" value="AAT86234.1"/>
    <property type="molecule type" value="Genomic_DNA"/>
</dbReference>
<dbReference type="RefSeq" id="WP_000529929.1">
    <property type="nucleotide sequence ID" value="NC_006086.1"/>
</dbReference>
<dbReference type="SMR" id="Q5XEC9"/>
<dbReference type="GeneID" id="69900032"/>
<dbReference type="KEGG" id="spa:M6_Spy0099"/>
<dbReference type="HOGENOM" id="CLU_058591_0_2_9"/>
<dbReference type="Proteomes" id="UP000001167">
    <property type="component" value="Chromosome"/>
</dbReference>
<dbReference type="GO" id="GO:0022627">
    <property type="term" value="C:cytosolic small ribosomal subunit"/>
    <property type="evidence" value="ECO:0007669"/>
    <property type="project" value="TreeGrafter"/>
</dbReference>
<dbReference type="GO" id="GO:0003729">
    <property type="term" value="F:mRNA binding"/>
    <property type="evidence" value="ECO:0007669"/>
    <property type="project" value="UniProtKB-UniRule"/>
</dbReference>
<dbReference type="GO" id="GO:0019843">
    <property type="term" value="F:rRNA binding"/>
    <property type="evidence" value="ECO:0007669"/>
    <property type="project" value="UniProtKB-UniRule"/>
</dbReference>
<dbReference type="GO" id="GO:0003735">
    <property type="term" value="F:structural constituent of ribosome"/>
    <property type="evidence" value="ECO:0007669"/>
    <property type="project" value="InterPro"/>
</dbReference>
<dbReference type="GO" id="GO:0006412">
    <property type="term" value="P:translation"/>
    <property type="evidence" value="ECO:0007669"/>
    <property type="project" value="UniProtKB-UniRule"/>
</dbReference>
<dbReference type="CDD" id="cd02412">
    <property type="entry name" value="KH-II_30S_S3"/>
    <property type="match status" value="1"/>
</dbReference>
<dbReference type="FunFam" id="3.30.1140.32:FF:000001">
    <property type="entry name" value="30S ribosomal protein S3"/>
    <property type="match status" value="1"/>
</dbReference>
<dbReference type="FunFam" id="3.30.300.20:FF:000001">
    <property type="entry name" value="30S ribosomal protein S3"/>
    <property type="match status" value="1"/>
</dbReference>
<dbReference type="Gene3D" id="3.30.300.20">
    <property type="match status" value="1"/>
</dbReference>
<dbReference type="Gene3D" id="3.30.1140.32">
    <property type="entry name" value="Ribosomal protein S3, C-terminal domain"/>
    <property type="match status" value="1"/>
</dbReference>
<dbReference type="HAMAP" id="MF_01309_B">
    <property type="entry name" value="Ribosomal_uS3_B"/>
    <property type="match status" value="1"/>
</dbReference>
<dbReference type="InterPro" id="IPR004087">
    <property type="entry name" value="KH_dom"/>
</dbReference>
<dbReference type="InterPro" id="IPR015946">
    <property type="entry name" value="KH_dom-like_a/b"/>
</dbReference>
<dbReference type="InterPro" id="IPR004044">
    <property type="entry name" value="KH_dom_type_2"/>
</dbReference>
<dbReference type="InterPro" id="IPR009019">
    <property type="entry name" value="KH_sf_prok-type"/>
</dbReference>
<dbReference type="InterPro" id="IPR036419">
    <property type="entry name" value="Ribosomal_S3_C_sf"/>
</dbReference>
<dbReference type="InterPro" id="IPR005704">
    <property type="entry name" value="Ribosomal_uS3_bac-typ"/>
</dbReference>
<dbReference type="InterPro" id="IPR001351">
    <property type="entry name" value="Ribosomal_uS3_C"/>
</dbReference>
<dbReference type="InterPro" id="IPR018280">
    <property type="entry name" value="Ribosomal_uS3_CS"/>
</dbReference>
<dbReference type="NCBIfam" id="TIGR01009">
    <property type="entry name" value="rpsC_bact"/>
    <property type="match status" value="1"/>
</dbReference>
<dbReference type="PANTHER" id="PTHR11760">
    <property type="entry name" value="30S/40S RIBOSOMAL PROTEIN S3"/>
    <property type="match status" value="1"/>
</dbReference>
<dbReference type="PANTHER" id="PTHR11760:SF19">
    <property type="entry name" value="SMALL RIBOSOMAL SUBUNIT PROTEIN US3C"/>
    <property type="match status" value="1"/>
</dbReference>
<dbReference type="Pfam" id="PF07650">
    <property type="entry name" value="KH_2"/>
    <property type="match status" value="1"/>
</dbReference>
<dbReference type="Pfam" id="PF00189">
    <property type="entry name" value="Ribosomal_S3_C"/>
    <property type="match status" value="1"/>
</dbReference>
<dbReference type="SMART" id="SM00322">
    <property type="entry name" value="KH"/>
    <property type="match status" value="1"/>
</dbReference>
<dbReference type="SUPFAM" id="SSF54814">
    <property type="entry name" value="Prokaryotic type KH domain (KH-domain type II)"/>
    <property type="match status" value="1"/>
</dbReference>
<dbReference type="SUPFAM" id="SSF54821">
    <property type="entry name" value="Ribosomal protein S3 C-terminal domain"/>
    <property type="match status" value="1"/>
</dbReference>
<dbReference type="PROSITE" id="PS50823">
    <property type="entry name" value="KH_TYPE_2"/>
    <property type="match status" value="1"/>
</dbReference>
<dbReference type="PROSITE" id="PS00548">
    <property type="entry name" value="RIBOSOMAL_S3"/>
    <property type="match status" value="1"/>
</dbReference>
<comment type="function">
    <text evidence="1">Binds the lower part of the 30S subunit head. Binds mRNA in the 70S ribosome, positioning it for translation.</text>
</comment>
<comment type="subunit">
    <text evidence="1">Part of the 30S ribosomal subunit. Forms a tight complex with proteins S10 and S14.</text>
</comment>
<comment type="similarity">
    <text evidence="1">Belongs to the universal ribosomal protein uS3 family.</text>
</comment>
<reference key="1">
    <citation type="journal article" date="2004" name="J. Infect. Dis.">
        <title>Progress toward characterization of the group A Streptococcus metagenome: complete genome sequence of a macrolide-resistant serotype M6 strain.</title>
        <authorList>
            <person name="Banks D.J."/>
            <person name="Porcella S.F."/>
            <person name="Barbian K.D."/>
            <person name="Beres S.B."/>
            <person name="Philips L.E."/>
            <person name="Voyich J.M."/>
            <person name="DeLeo F.R."/>
            <person name="Martin J.M."/>
            <person name="Somerville G.A."/>
            <person name="Musser J.M."/>
        </authorList>
    </citation>
    <scope>NUCLEOTIDE SEQUENCE [LARGE SCALE GENOMIC DNA]</scope>
    <source>
        <strain>ATCC BAA-946 / MGAS10394</strain>
    </source>
</reference>
<evidence type="ECO:0000255" key="1">
    <source>
        <dbReference type="HAMAP-Rule" id="MF_01309"/>
    </source>
</evidence>
<evidence type="ECO:0000305" key="2"/>
<accession>Q5XEC9</accession>
<protein>
    <recommendedName>
        <fullName evidence="1">Small ribosomal subunit protein uS3</fullName>
    </recommendedName>
    <alternativeName>
        <fullName evidence="2">30S ribosomal protein S3</fullName>
    </alternativeName>
</protein>
<keyword id="KW-0687">Ribonucleoprotein</keyword>
<keyword id="KW-0689">Ribosomal protein</keyword>
<keyword id="KW-0694">RNA-binding</keyword>
<keyword id="KW-0699">rRNA-binding</keyword>
<gene>
    <name evidence="1" type="primary">rpsC</name>
    <name type="ordered locus">M6_Spy0099</name>
</gene>
<name>RS3_STRP6</name>
<organism>
    <name type="scientific">Streptococcus pyogenes serotype M6 (strain ATCC BAA-946 / MGAS10394)</name>
    <dbReference type="NCBI Taxonomy" id="286636"/>
    <lineage>
        <taxon>Bacteria</taxon>
        <taxon>Bacillati</taxon>
        <taxon>Bacillota</taxon>
        <taxon>Bacilli</taxon>
        <taxon>Lactobacillales</taxon>
        <taxon>Streptococcaceae</taxon>
        <taxon>Streptococcus</taxon>
    </lineage>
</organism>